<accession>Q8Y020</accession>
<dbReference type="EMBL" id="AL646052">
    <property type="protein sequence ID" value="CAD14927.1"/>
    <property type="molecule type" value="Genomic_DNA"/>
</dbReference>
<dbReference type="RefSeq" id="WP_011001174.1">
    <property type="nucleotide sequence ID" value="NC_003295.1"/>
</dbReference>
<dbReference type="SMR" id="Q8Y020"/>
<dbReference type="STRING" id="267608.RSc1225"/>
<dbReference type="EnsemblBacteria" id="CAD14927">
    <property type="protein sequence ID" value="CAD14927"/>
    <property type="gene ID" value="RSc1225"/>
</dbReference>
<dbReference type="KEGG" id="rso:RSc1225"/>
<dbReference type="eggNOG" id="COG3705">
    <property type="taxonomic scope" value="Bacteria"/>
</dbReference>
<dbReference type="HOGENOM" id="CLU_025113_0_1_4"/>
<dbReference type="UniPathway" id="UPA00031">
    <property type="reaction ID" value="UER00006"/>
</dbReference>
<dbReference type="Proteomes" id="UP000001436">
    <property type="component" value="Chromosome"/>
</dbReference>
<dbReference type="GO" id="GO:0005737">
    <property type="term" value="C:cytoplasm"/>
    <property type="evidence" value="ECO:0007669"/>
    <property type="project" value="UniProtKB-SubCell"/>
</dbReference>
<dbReference type="GO" id="GO:0004821">
    <property type="term" value="F:histidine-tRNA ligase activity"/>
    <property type="evidence" value="ECO:0007669"/>
    <property type="project" value="TreeGrafter"/>
</dbReference>
<dbReference type="GO" id="GO:0006427">
    <property type="term" value="P:histidyl-tRNA aminoacylation"/>
    <property type="evidence" value="ECO:0007669"/>
    <property type="project" value="TreeGrafter"/>
</dbReference>
<dbReference type="GO" id="GO:0000105">
    <property type="term" value="P:L-histidine biosynthetic process"/>
    <property type="evidence" value="ECO:0007669"/>
    <property type="project" value="UniProtKB-UniRule"/>
</dbReference>
<dbReference type="CDD" id="cd00773">
    <property type="entry name" value="HisRS-like_core"/>
    <property type="match status" value="1"/>
</dbReference>
<dbReference type="Gene3D" id="3.30.930.10">
    <property type="entry name" value="Bira Bifunctional Protein, Domain 2"/>
    <property type="match status" value="1"/>
</dbReference>
<dbReference type="HAMAP" id="MF_00125">
    <property type="entry name" value="HisZ"/>
    <property type="match status" value="1"/>
</dbReference>
<dbReference type="InterPro" id="IPR045864">
    <property type="entry name" value="aa-tRNA-synth_II/BPL/LPL"/>
</dbReference>
<dbReference type="InterPro" id="IPR041715">
    <property type="entry name" value="HisRS-like_core"/>
</dbReference>
<dbReference type="InterPro" id="IPR004516">
    <property type="entry name" value="HisRS/HisZ"/>
</dbReference>
<dbReference type="InterPro" id="IPR004517">
    <property type="entry name" value="HisZ"/>
</dbReference>
<dbReference type="NCBIfam" id="TIGR00443">
    <property type="entry name" value="hisZ_biosyn_reg"/>
    <property type="match status" value="1"/>
</dbReference>
<dbReference type="NCBIfam" id="NF008935">
    <property type="entry name" value="PRK12292.1-1"/>
    <property type="match status" value="1"/>
</dbReference>
<dbReference type="NCBIfam" id="NF009086">
    <property type="entry name" value="PRK12421.1"/>
    <property type="match status" value="1"/>
</dbReference>
<dbReference type="PANTHER" id="PTHR43707:SF1">
    <property type="entry name" value="HISTIDINE--TRNA LIGASE, MITOCHONDRIAL-RELATED"/>
    <property type="match status" value="1"/>
</dbReference>
<dbReference type="PANTHER" id="PTHR43707">
    <property type="entry name" value="HISTIDYL-TRNA SYNTHETASE"/>
    <property type="match status" value="1"/>
</dbReference>
<dbReference type="Pfam" id="PF13393">
    <property type="entry name" value="tRNA-synt_His"/>
    <property type="match status" value="1"/>
</dbReference>
<dbReference type="SUPFAM" id="SSF55681">
    <property type="entry name" value="Class II aaRS and biotin synthetases"/>
    <property type="match status" value="1"/>
</dbReference>
<gene>
    <name evidence="1" type="primary">hisZ</name>
    <name type="ordered locus">RSc1225</name>
    <name type="ORF">RS02732</name>
</gene>
<comment type="function">
    <text evidence="1">Required for the first step of histidine biosynthesis. May allow the feedback regulation of ATP phosphoribosyltransferase activity by histidine.</text>
</comment>
<comment type="pathway">
    <text evidence="1">Amino-acid biosynthesis; L-histidine biosynthesis; L-histidine from 5-phospho-alpha-D-ribose 1-diphosphate: step 1/9.</text>
</comment>
<comment type="subunit">
    <text evidence="1">Heteromultimer composed of HisG and HisZ subunits.</text>
</comment>
<comment type="subcellular location">
    <subcellularLocation>
        <location evidence="1">Cytoplasm</location>
    </subcellularLocation>
</comment>
<comment type="miscellaneous">
    <text>This function is generally fulfilled by the C-terminal part of HisG, which is missing in some bacteria such as this one.</text>
</comment>
<comment type="similarity">
    <text evidence="1">Belongs to the class-II aminoacyl-tRNA synthetase family. HisZ subfamily.</text>
</comment>
<evidence type="ECO:0000255" key="1">
    <source>
        <dbReference type="HAMAP-Rule" id="MF_00125"/>
    </source>
</evidence>
<feature type="chain" id="PRO_0000171056" description="ATP phosphoribosyltransferase regulatory subunit">
    <location>
        <begin position="1"/>
        <end position="386"/>
    </location>
</feature>
<organism>
    <name type="scientific">Ralstonia nicotianae (strain ATCC BAA-1114 / GMI1000)</name>
    <name type="common">Ralstonia solanacearum</name>
    <dbReference type="NCBI Taxonomy" id="267608"/>
    <lineage>
        <taxon>Bacteria</taxon>
        <taxon>Pseudomonadati</taxon>
        <taxon>Pseudomonadota</taxon>
        <taxon>Betaproteobacteria</taxon>
        <taxon>Burkholderiales</taxon>
        <taxon>Burkholderiaceae</taxon>
        <taxon>Ralstonia</taxon>
        <taxon>Ralstonia solanacearum species complex</taxon>
    </lineage>
</organism>
<protein>
    <recommendedName>
        <fullName evidence="1">ATP phosphoribosyltransferase regulatory subunit</fullName>
    </recommendedName>
</protein>
<keyword id="KW-0028">Amino-acid biosynthesis</keyword>
<keyword id="KW-0963">Cytoplasm</keyword>
<keyword id="KW-0368">Histidine biosynthesis</keyword>
<keyword id="KW-1185">Reference proteome</keyword>
<sequence>MPNWLLPESIADVLPSEARKIEELRRRMLDLFRTYGYELVMPPMLEYIESLLSGTGHDLDLKTFKLVDQLSGRTIGLRADITPQVARIDAHLLNRAGVTRLCYAGSVLHTRPSGFHVTREPLQIGAEIYGHAGLEADLEIQDLMLAALSAAGLADVRLDLCHVGVLAALLAQAPVAPDVQDELFAALASKDAPALHALTAGLPAAQRDAINLLPSLYGGVDVLARARAQLPQLPAIGRALDDLATLAAHAGGAAVNIDLADLRGYHYHSGVMFAAYVAGVPNAVARGGRYDKVGEAFGRARPATGFSLDLREVAGISPVQARAAAIHAPWSGDAKLREAIAGLRATGEIVIQSLPGHPEDLEEFAYDRQLAEEGGRWVVKPRKASA</sequence>
<name>HISZ_RALN1</name>
<proteinExistence type="inferred from homology"/>
<reference key="1">
    <citation type="journal article" date="2002" name="Nature">
        <title>Genome sequence of the plant pathogen Ralstonia solanacearum.</title>
        <authorList>
            <person name="Salanoubat M."/>
            <person name="Genin S."/>
            <person name="Artiguenave F."/>
            <person name="Gouzy J."/>
            <person name="Mangenot S."/>
            <person name="Arlat M."/>
            <person name="Billault A."/>
            <person name="Brottier P."/>
            <person name="Camus J.-C."/>
            <person name="Cattolico L."/>
            <person name="Chandler M."/>
            <person name="Choisne N."/>
            <person name="Claudel-Renard C."/>
            <person name="Cunnac S."/>
            <person name="Demange N."/>
            <person name="Gaspin C."/>
            <person name="Lavie M."/>
            <person name="Moisan A."/>
            <person name="Robert C."/>
            <person name="Saurin W."/>
            <person name="Schiex T."/>
            <person name="Siguier P."/>
            <person name="Thebault P."/>
            <person name="Whalen M."/>
            <person name="Wincker P."/>
            <person name="Levy M."/>
            <person name="Weissenbach J."/>
            <person name="Boucher C.A."/>
        </authorList>
    </citation>
    <scope>NUCLEOTIDE SEQUENCE [LARGE SCALE GENOMIC DNA]</scope>
    <source>
        <strain>ATCC BAA-1114 / GMI1000</strain>
    </source>
</reference>